<sequence length="104" mass="11821">MTHEGKEPVDLRVIRELWGVICERADCPDENSYTSRLLQDVKGIDKVLEKVGEESTEFILAVKNGVPERTTEEAADLFFHVLVALRAADVDLSGVIRELERRRK</sequence>
<proteinExistence type="inferred from homology"/>
<dbReference type="EC" id="3.6.1.31" evidence="1"/>
<dbReference type="EMBL" id="CP000780">
    <property type="protein sequence ID" value="ABS56586.1"/>
    <property type="molecule type" value="Genomic_DNA"/>
</dbReference>
<dbReference type="RefSeq" id="WP_012107642.1">
    <property type="nucleotide sequence ID" value="NC_009712.1"/>
</dbReference>
<dbReference type="SMR" id="A7IA25"/>
<dbReference type="STRING" id="456442.Mboo_2072"/>
<dbReference type="GeneID" id="5409781"/>
<dbReference type="KEGG" id="mbn:Mboo_2072"/>
<dbReference type="eggNOG" id="arCOG02677">
    <property type="taxonomic scope" value="Archaea"/>
</dbReference>
<dbReference type="HOGENOM" id="CLU_123337_0_0_2"/>
<dbReference type="OrthoDB" id="39686at2157"/>
<dbReference type="UniPathway" id="UPA00031">
    <property type="reaction ID" value="UER00007"/>
</dbReference>
<dbReference type="Proteomes" id="UP000002408">
    <property type="component" value="Chromosome"/>
</dbReference>
<dbReference type="GO" id="GO:0005737">
    <property type="term" value="C:cytoplasm"/>
    <property type="evidence" value="ECO:0007669"/>
    <property type="project" value="UniProtKB-SubCell"/>
</dbReference>
<dbReference type="GO" id="GO:0005524">
    <property type="term" value="F:ATP binding"/>
    <property type="evidence" value="ECO:0007669"/>
    <property type="project" value="UniProtKB-KW"/>
</dbReference>
<dbReference type="GO" id="GO:0004636">
    <property type="term" value="F:phosphoribosyl-ATP diphosphatase activity"/>
    <property type="evidence" value="ECO:0007669"/>
    <property type="project" value="UniProtKB-UniRule"/>
</dbReference>
<dbReference type="GO" id="GO:0000105">
    <property type="term" value="P:L-histidine biosynthetic process"/>
    <property type="evidence" value="ECO:0007669"/>
    <property type="project" value="UniProtKB-UniRule"/>
</dbReference>
<dbReference type="CDD" id="cd11534">
    <property type="entry name" value="NTP-PPase_HisIE_like"/>
    <property type="match status" value="1"/>
</dbReference>
<dbReference type="Gene3D" id="1.10.287.1080">
    <property type="entry name" value="MazG-like"/>
    <property type="match status" value="1"/>
</dbReference>
<dbReference type="HAMAP" id="MF_01020">
    <property type="entry name" value="HisE"/>
    <property type="match status" value="1"/>
</dbReference>
<dbReference type="InterPro" id="IPR008179">
    <property type="entry name" value="HisE"/>
</dbReference>
<dbReference type="InterPro" id="IPR021130">
    <property type="entry name" value="PRib-ATP_PPHydrolase-like"/>
</dbReference>
<dbReference type="NCBIfam" id="TIGR03188">
    <property type="entry name" value="histidine_hisI"/>
    <property type="match status" value="1"/>
</dbReference>
<dbReference type="PANTHER" id="PTHR42945">
    <property type="entry name" value="HISTIDINE BIOSYNTHESIS BIFUNCTIONAL PROTEIN"/>
    <property type="match status" value="1"/>
</dbReference>
<dbReference type="PANTHER" id="PTHR42945:SF1">
    <property type="entry name" value="HISTIDINE BIOSYNTHESIS BIFUNCTIONAL PROTEIN HIS7"/>
    <property type="match status" value="1"/>
</dbReference>
<dbReference type="Pfam" id="PF01503">
    <property type="entry name" value="PRA-PH"/>
    <property type="match status" value="1"/>
</dbReference>
<dbReference type="SUPFAM" id="SSF101386">
    <property type="entry name" value="all-alpha NTP pyrophosphatases"/>
    <property type="match status" value="1"/>
</dbReference>
<accession>A7IA25</accession>
<feature type="chain" id="PRO_0000319674" description="Phosphoribosyl-ATP pyrophosphatase">
    <location>
        <begin position="1"/>
        <end position="104"/>
    </location>
</feature>
<evidence type="ECO:0000255" key="1">
    <source>
        <dbReference type="HAMAP-Rule" id="MF_01020"/>
    </source>
</evidence>
<protein>
    <recommendedName>
        <fullName evidence="1">Phosphoribosyl-ATP pyrophosphatase</fullName>
        <shortName evidence="1">PRA-PH</shortName>
        <ecNumber evidence="1">3.6.1.31</ecNumber>
    </recommendedName>
</protein>
<name>HIS2_METB6</name>
<keyword id="KW-0028">Amino-acid biosynthesis</keyword>
<keyword id="KW-0067">ATP-binding</keyword>
<keyword id="KW-0963">Cytoplasm</keyword>
<keyword id="KW-0368">Histidine biosynthesis</keyword>
<keyword id="KW-0378">Hydrolase</keyword>
<keyword id="KW-0547">Nucleotide-binding</keyword>
<keyword id="KW-1185">Reference proteome</keyword>
<reference key="1">
    <citation type="journal article" date="2015" name="Microbiology">
        <title>Genome of Methanoregula boonei 6A8 reveals adaptations to oligotrophic peatland environments.</title>
        <authorList>
            <person name="Braeuer S."/>
            <person name="Cadillo-Quiroz H."/>
            <person name="Kyrpides N."/>
            <person name="Woyke T."/>
            <person name="Goodwin L."/>
            <person name="Detter C."/>
            <person name="Podell S."/>
            <person name="Yavitt J.B."/>
            <person name="Zinder S.H."/>
        </authorList>
    </citation>
    <scope>NUCLEOTIDE SEQUENCE [LARGE SCALE GENOMIC DNA]</scope>
    <source>
        <strain>DSM 21154 / JCM 14090 / 6A8</strain>
    </source>
</reference>
<organism>
    <name type="scientific">Methanoregula boonei (strain DSM 21154 / JCM 14090 / 6A8)</name>
    <dbReference type="NCBI Taxonomy" id="456442"/>
    <lineage>
        <taxon>Archaea</taxon>
        <taxon>Methanobacteriati</taxon>
        <taxon>Methanobacteriota</taxon>
        <taxon>Stenosarchaea group</taxon>
        <taxon>Methanomicrobia</taxon>
        <taxon>Methanomicrobiales</taxon>
        <taxon>Methanoregulaceae</taxon>
        <taxon>Methanoregula</taxon>
    </lineage>
</organism>
<gene>
    <name evidence="1" type="primary">hisE</name>
    <name type="ordered locus">Mboo_2072</name>
</gene>
<comment type="catalytic activity">
    <reaction evidence="1">
        <text>1-(5-phospho-beta-D-ribosyl)-ATP + H2O = 1-(5-phospho-beta-D-ribosyl)-5'-AMP + diphosphate + H(+)</text>
        <dbReference type="Rhea" id="RHEA:22828"/>
        <dbReference type="ChEBI" id="CHEBI:15377"/>
        <dbReference type="ChEBI" id="CHEBI:15378"/>
        <dbReference type="ChEBI" id="CHEBI:33019"/>
        <dbReference type="ChEBI" id="CHEBI:59457"/>
        <dbReference type="ChEBI" id="CHEBI:73183"/>
        <dbReference type="EC" id="3.6.1.31"/>
    </reaction>
</comment>
<comment type="pathway">
    <text evidence="1">Amino-acid biosynthesis; L-histidine biosynthesis; L-histidine from 5-phospho-alpha-D-ribose 1-diphosphate: step 2/9.</text>
</comment>
<comment type="subcellular location">
    <subcellularLocation>
        <location evidence="1">Cytoplasm</location>
    </subcellularLocation>
</comment>
<comment type="similarity">
    <text evidence="1">Belongs to the PRA-PH family.</text>
</comment>